<gene>
    <name evidence="1" type="primary">ghrA</name>
    <name type="ordered locus">KPN78578_10280</name>
    <name type="ORF">KPN_01056</name>
</gene>
<reference key="1">
    <citation type="submission" date="2006-09" db="EMBL/GenBank/DDBJ databases">
        <authorList>
            <consortium name="The Klebsiella pneumonia Genome Sequencing Project"/>
            <person name="McClelland M."/>
            <person name="Sanderson E.K."/>
            <person name="Spieth J."/>
            <person name="Clifton W.S."/>
            <person name="Latreille P."/>
            <person name="Sabo A."/>
            <person name="Pepin K."/>
            <person name="Bhonagiri V."/>
            <person name="Porwollik S."/>
            <person name="Ali J."/>
            <person name="Wilson R.K."/>
        </authorList>
    </citation>
    <scope>NUCLEOTIDE SEQUENCE [LARGE SCALE GENOMIC DNA]</scope>
    <source>
        <strain>ATCC 700721 / MGH 78578</strain>
    </source>
</reference>
<protein>
    <recommendedName>
        <fullName evidence="1">Glyoxylate/hydroxypyruvate reductase A</fullName>
        <ecNumber evidence="1">1.1.1.79</ecNumber>
        <ecNumber evidence="1">1.1.1.81</ecNumber>
    </recommendedName>
    <alternativeName>
        <fullName evidence="1">2-ketoacid reductase</fullName>
    </alternativeName>
</protein>
<dbReference type="EC" id="1.1.1.79" evidence="1"/>
<dbReference type="EC" id="1.1.1.81" evidence="1"/>
<dbReference type="EMBL" id="CP000647">
    <property type="protein sequence ID" value="ABR76489.1"/>
    <property type="molecule type" value="Genomic_DNA"/>
</dbReference>
<dbReference type="RefSeq" id="WP_012068543.1">
    <property type="nucleotide sequence ID" value="NC_009648.1"/>
</dbReference>
<dbReference type="SMR" id="A6T7B8"/>
<dbReference type="STRING" id="272620.KPN_01056"/>
<dbReference type="PaxDb" id="272620-KPN_01056"/>
<dbReference type="EnsemblBacteria" id="ABR76489">
    <property type="protein sequence ID" value="ABR76489"/>
    <property type="gene ID" value="KPN_01056"/>
</dbReference>
<dbReference type="KEGG" id="kpn:KPN_01056"/>
<dbReference type="HOGENOM" id="CLU_019796_1_0_6"/>
<dbReference type="Proteomes" id="UP000000265">
    <property type="component" value="Chromosome"/>
</dbReference>
<dbReference type="GO" id="GO:0005737">
    <property type="term" value="C:cytoplasm"/>
    <property type="evidence" value="ECO:0007669"/>
    <property type="project" value="UniProtKB-SubCell"/>
</dbReference>
<dbReference type="GO" id="GO:0030267">
    <property type="term" value="F:glyoxylate reductase (NADPH) activity"/>
    <property type="evidence" value="ECO:0007669"/>
    <property type="project" value="UniProtKB-UniRule"/>
</dbReference>
<dbReference type="GO" id="GO:0008465">
    <property type="term" value="F:hydroxypyruvate reductase (NADH) activity"/>
    <property type="evidence" value="ECO:0007669"/>
    <property type="project" value="RHEA"/>
</dbReference>
<dbReference type="GO" id="GO:0120509">
    <property type="term" value="F:hydroxypyruvate reductase (NADPH) activity"/>
    <property type="evidence" value="ECO:0007669"/>
    <property type="project" value="RHEA"/>
</dbReference>
<dbReference type="GO" id="GO:0051287">
    <property type="term" value="F:NAD binding"/>
    <property type="evidence" value="ECO:0007669"/>
    <property type="project" value="InterPro"/>
</dbReference>
<dbReference type="CDD" id="cd12164">
    <property type="entry name" value="GDH_like_2"/>
    <property type="match status" value="1"/>
</dbReference>
<dbReference type="FunFam" id="3.40.50.720:FF:000110">
    <property type="entry name" value="Glyoxylate/hydroxypyruvate reductase A"/>
    <property type="match status" value="1"/>
</dbReference>
<dbReference type="Gene3D" id="3.40.50.720">
    <property type="entry name" value="NAD(P)-binding Rossmann-like Domain"/>
    <property type="match status" value="2"/>
</dbReference>
<dbReference type="HAMAP" id="MF_01666">
    <property type="entry name" value="2_Hacid_dh_C_GhrA"/>
    <property type="match status" value="1"/>
</dbReference>
<dbReference type="InterPro" id="IPR006140">
    <property type="entry name" value="D-isomer_DH_NAD-bd"/>
</dbReference>
<dbReference type="InterPro" id="IPR023514">
    <property type="entry name" value="GhrA_Enterobacterales"/>
</dbReference>
<dbReference type="InterPro" id="IPR036291">
    <property type="entry name" value="NAD(P)-bd_dom_sf"/>
</dbReference>
<dbReference type="NCBIfam" id="NF012013">
    <property type="entry name" value="PRK15469.1"/>
    <property type="match status" value="1"/>
</dbReference>
<dbReference type="PANTHER" id="PTHR43333">
    <property type="entry name" value="2-HACID_DH_C DOMAIN-CONTAINING PROTEIN"/>
    <property type="match status" value="1"/>
</dbReference>
<dbReference type="PANTHER" id="PTHR43333:SF1">
    <property type="entry name" value="D-ISOMER SPECIFIC 2-HYDROXYACID DEHYDROGENASE NAD-BINDING DOMAIN-CONTAINING PROTEIN"/>
    <property type="match status" value="1"/>
</dbReference>
<dbReference type="Pfam" id="PF02826">
    <property type="entry name" value="2-Hacid_dh_C"/>
    <property type="match status" value="1"/>
</dbReference>
<dbReference type="SUPFAM" id="SSF51735">
    <property type="entry name" value="NAD(P)-binding Rossmann-fold domains"/>
    <property type="match status" value="1"/>
</dbReference>
<proteinExistence type="inferred from homology"/>
<evidence type="ECO:0000255" key="1">
    <source>
        <dbReference type="HAMAP-Rule" id="MF_01666"/>
    </source>
</evidence>
<organism>
    <name type="scientific">Klebsiella pneumoniae subsp. pneumoniae (strain ATCC 700721 / MGH 78578)</name>
    <dbReference type="NCBI Taxonomy" id="272620"/>
    <lineage>
        <taxon>Bacteria</taxon>
        <taxon>Pseudomonadati</taxon>
        <taxon>Pseudomonadota</taxon>
        <taxon>Gammaproteobacteria</taxon>
        <taxon>Enterobacterales</taxon>
        <taxon>Enterobacteriaceae</taxon>
        <taxon>Klebsiella/Raoultella group</taxon>
        <taxon>Klebsiella</taxon>
        <taxon>Klebsiella pneumoniae complex</taxon>
    </lineage>
</organism>
<feature type="chain" id="PRO_0000348365" description="Glyoxylate/hydroxypyruvate reductase A">
    <location>
        <begin position="1"/>
        <end position="312"/>
    </location>
</feature>
<feature type="active site" evidence="1">
    <location>
        <position position="227"/>
    </location>
</feature>
<feature type="active site" description="Proton donor" evidence="1">
    <location>
        <position position="275"/>
    </location>
</feature>
<name>GHRA_KLEP7</name>
<comment type="function">
    <text evidence="1">Catalyzes the NADPH-dependent reduction of glyoxylate and hydroxypyruvate into glycolate and glycerate, respectively.</text>
</comment>
<comment type="catalytic activity">
    <reaction evidence="1">
        <text>glycolate + NADP(+) = glyoxylate + NADPH + H(+)</text>
        <dbReference type="Rhea" id="RHEA:10992"/>
        <dbReference type="ChEBI" id="CHEBI:15378"/>
        <dbReference type="ChEBI" id="CHEBI:29805"/>
        <dbReference type="ChEBI" id="CHEBI:36655"/>
        <dbReference type="ChEBI" id="CHEBI:57783"/>
        <dbReference type="ChEBI" id="CHEBI:58349"/>
        <dbReference type="EC" id="1.1.1.79"/>
    </reaction>
</comment>
<comment type="catalytic activity">
    <reaction evidence="1">
        <text>(R)-glycerate + NAD(+) = 3-hydroxypyruvate + NADH + H(+)</text>
        <dbReference type="Rhea" id="RHEA:17905"/>
        <dbReference type="ChEBI" id="CHEBI:15378"/>
        <dbReference type="ChEBI" id="CHEBI:16659"/>
        <dbReference type="ChEBI" id="CHEBI:17180"/>
        <dbReference type="ChEBI" id="CHEBI:57540"/>
        <dbReference type="ChEBI" id="CHEBI:57945"/>
        <dbReference type="EC" id="1.1.1.81"/>
    </reaction>
</comment>
<comment type="catalytic activity">
    <reaction evidence="1">
        <text>(R)-glycerate + NADP(+) = 3-hydroxypyruvate + NADPH + H(+)</text>
        <dbReference type="Rhea" id="RHEA:18657"/>
        <dbReference type="ChEBI" id="CHEBI:15378"/>
        <dbReference type="ChEBI" id="CHEBI:16659"/>
        <dbReference type="ChEBI" id="CHEBI:17180"/>
        <dbReference type="ChEBI" id="CHEBI:57783"/>
        <dbReference type="ChEBI" id="CHEBI:58349"/>
        <dbReference type="EC" id="1.1.1.81"/>
    </reaction>
</comment>
<comment type="subcellular location">
    <subcellularLocation>
        <location evidence="1">Cytoplasm</location>
    </subcellularLocation>
</comment>
<comment type="similarity">
    <text evidence="1">Belongs to the D-isomer specific 2-hydroxyacid dehydrogenase family. GhrA subfamily.</text>
</comment>
<accession>A6T7B8</accession>
<keyword id="KW-0963">Cytoplasm</keyword>
<keyword id="KW-0520">NAD</keyword>
<keyword id="KW-0521">NADP</keyword>
<keyword id="KW-0560">Oxidoreductase</keyword>
<sequence>MEIIFYHPTFDTQYWICELEKQLPGARVREWKAGDNRPADYALVWHPPVEMLQGRALKAVFALGAGVDSILSKLRDHPDMLPLSIPLFRLEDTGMGRQMQEYAVSQVLHWFRRFDDYQALKLASRWQPLPEYRADEFTVGIMGAGVLGAKVAESLQPWGFPLRVWSRSRKSWPQVQSFAGQAELGEFMQGTRVLINLLPNTAETAGIINQTLLAQLPDESYVLNLARGVHVVEEDLLAALNSGKLKGAMLDVFSREPLPQESPLWAHPRVAMTPHVAAVTRPMEAITYIAETISRLERGEPVSGQVDRQRGY</sequence>